<gene>
    <name evidence="1" type="primary">kdpA</name>
    <name type="ordered locus">LMHCC_2854</name>
</gene>
<organism>
    <name type="scientific">Listeria monocytogenes serotype 4a (strain HCC23)</name>
    <dbReference type="NCBI Taxonomy" id="552536"/>
    <lineage>
        <taxon>Bacteria</taxon>
        <taxon>Bacillati</taxon>
        <taxon>Bacillota</taxon>
        <taxon>Bacilli</taxon>
        <taxon>Bacillales</taxon>
        <taxon>Listeriaceae</taxon>
        <taxon>Listeria</taxon>
    </lineage>
</organism>
<name>KDPA_LISMH</name>
<reference key="1">
    <citation type="journal article" date="2011" name="J. Bacteriol.">
        <title>Genome sequence of lineage III Listeria monocytogenes strain HCC23.</title>
        <authorList>
            <person name="Steele C.L."/>
            <person name="Donaldson J.R."/>
            <person name="Paul D."/>
            <person name="Banes M.M."/>
            <person name="Arick T."/>
            <person name="Bridges S.M."/>
            <person name="Lawrence M.L."/>
        </authorList>
    </citation>
    <scope>NUCLEOTIDE SEQUENCE [LARGE SCALE GENOMIC DNA]</scope>
    <source>
        <strain>HCC23</strain>
    </source>
</reference>
<evidence type="ECO:0000255" key="1">
    <source>
        <dbReference type="HAMAP-Rule" id="MF_00275"/>
    </source>
</evidence>
<dbReference type="EMBL" id="CP001175">
    <property type="protein sequence ID" value="ACK41185.1"/>
    <property type="molecule type" value="Genomic_DNA"/>
</dbReference>
<dbReference type="RefSeq" id="WP_012582344.1">
    <property type="nucleotide sequence ID" value="NC_011660.1"/>
</dbReference>
<dbReference type="SMR" id="B8DAW0"/>
<dbReference type="KEGG" id="lmh:LMHCC_2854"/>
<dbReference type="HOGENOM" id="CLU_018614_3_0_9"/>
<dbReference type="GO" id="GO:0005886">
    <property type="term" value="C:plasma membrane"/>
    <property type="evidence" value="ECO:0007669"/>
    <property type="project" value="UniProtKB-SubCell"/>
</dbReference>
<dbReference type="GO" id="GO:0008556">
    <property type="term" value="F:P-type potassium transmembrane transporter activity"/>
    <property type="evidence" value="ECO:0007669"/>
    <property type="project" value="InterPro"/>
</dbReference>
<dbReference type="GO" id="GO:0030955">
    <property type="term" value="F:potassium ion binding"/>
    <property type="evidence" value="ECO:0007669"/>
    <property type="project" value="UniProtKB-UniRule"/>
</dbReference>
<dbReference type="HAMAP" id="MF_00275">
    <property type="entry name" value="KdpA"/>
    <property type="match status" value="1"/>
</dbReference>
<dbReference type="InterPro" id="IPR004623">
    <property type="entry name" value="KdpA"/>
</dbReference>
<dbReference type="NCBIfam" id="TIGR00680">
    <property type="entry name" value="kdpA"/>
    <property type="match status" value="1"/>
</dbReference>
<dbReference type="PANTHER" id="PTHR30607">
    <property type="entry name" value="POTASSIUM-TRANSPORTING ATPASE A CHAIN"/>
    <property type="match status" value="1"/>
</dbReference>
<dbReference type="PANTHER" id="PTHR30607:SF2">
    <property type="entry name" value="POTASSIUM-TRANSPORTING ATPASE POTASSIUM-BINDING SUBUNIT"/>
    <property type="match status" value="1"/>
</dbReference>
<dbReference type="Pfam" id="PF03814">
    <property type="entry name" value="KdpA"/>
    <property type="match status" value="1"/>
</dbReference>
<dbReference type="PIRSF" id="PIRSF001294">
    <property type="entry name" value="K_ATPaseA"/>
    <property type="match status" value="1"/>
</dbReference>
<comment type="function">
    <text evidence="1">Part of the high-affinity ATP-driven potassium transport (or Kdp) system, which catalyzes the hydrolysis of ATP coupled with the electrogenic transport of potassium into the cytoplasm. This subunit binds the extracellular potassium ions and delivers the ions to the membrane domain of KdpB through an intramembrane tunnel.</text>
</comment>
<comment type="subunit">
    <text evidence="1">The system is composed of three essential subunits: KdpA, KdpB and KdpC.</text>
</comment>
<comment type="subcellular location">
    <subcellularLocation>
        <location evidence="1">Cell membrane</location>
        <topology evidence="1">Multi-pass membrane protein</topology>
    </subcellularLocation>
</comment>
<comment type="similarity">
    <text evidence="1">Belongs to the KdpA family.</text>
</comment>
<proteinExistence type="inferred from homology"/>
<protein>
    <recommendedName>
        <fullName evidence="1">Potassium-transporting ATPase potassium-binding subunit</fullName>
    </recommendedName>
    <alternativeName>
        <fullName evidence="1">ATP phosphohydrolase [potassium-transporting] A chain</fullName>
    </alternativeName>
    <alternativeName>
        <fullName evidence="1">Potassium-binding and translocating subunit A</fullName>
    </alternativeName>
    <alternativeName>
        <fullName evidence="1">Potassium-translocating ATPase A chain</fullName>
    </alternativeName>
</protein>
<keyword id="KW-1003">Cell membrane</keyword>
<keyword id="KW-0406">Ion transport</keyword>
<keyword id="KW-0472">Membrane</keyword>
<keyword id="KW-0630">Potassium</keyword>
<keyword id="KW-0633">Potassium transport</keyword>
<keyword id="KW-0812">Transmembrane</keyword>
<keyword id="KW-1133">Transmembrane helix</keyword>
<keyword id="KW-0813">Transport</keyword>
<accession>B8DAW0</accession>
<sequence length="561" mass="59351">MKYIVMQDVFFVVLLLVLAVPLGIYMYKVMIGEKVFLSRVLEPVERFGYRLMGVSEVGMSAKRYAVSVLAFSAVGFVFVMAVLMLQGFLPLNPEGMKGLSFSLAFNTAASFVSNTNWQAYSGETALSYFSQSIGLTVQNFVSAATGIAVLFAVIRGFIWKKQKTVGNFWQDLFRVTLYILLPLSLVLALLLVSQGVVQSFADYSVVETLENGAKQLIPLGPAASQIAIKQLGTNGGGFFGANSAFPFENPSSFTNLIEMLAILLIPVALVVMFGRAVKDSKQGRAIMTAMMIVFVIGVVAITISEQFAGPHYQGVATSGSMEGKEVRFGVGGSSLFAASTTAASNGAVNAMHDSLTPLGGLVPMFFMQLGEVIFGGVGSGLYGMIGFIILTVFIAGLLVGRTPEYLGKKIEPYDMKMVCLLILVPPLLTLFGTAVAVMMPSVQASVSASGAHGFSEVLYAFTSMGNNNGSAFAGFAADTTFTNMVGAVMMLLARFIPLVAALYLAQNMAGKSSVAASSGTLSTKNGMFIGLLIGVVVLVGALSFLPALALGPIADFFTTFK</sequence>
<feature type="chain" id="PRO_1000190740" description="Potassium-transporting ATPase potassium-binding subunit">
    <location>
        <begin position="1"/>
        <end position="561"/>
    </location>
</feature>
<feature type="transmembrane region" description="Helical" evidence="1">
    <location>
        <begin position="4"/>
        <end position="24"/>
    </location>
</feature>
<feature type="transmembrane region" description="Helical" evidence="1">
    <location>
        <begin position="65"/>
        <end position="85"/>
    </location>
</feature>
<feature type="transmembrane region" description="Helical" evidence="1">
    <location>
        <begin position="133"/>
        <end position="153"/>
    </location>
</feature>
<feature type="transmembrane region" description="Helical" evidence="1">
    <location>
        <begin position="177"/>
        <end position="197"/>
    </location>
</feature>
<feature type="transmembrane region" description="Helical" evidence="1">
    <location>
        <begin position="253"/>
        <end position="273"/>
    </location>
</feature>
<feature type="transmembrane region" description="Helical" evidence="1">
    <location>
        <begin position="285"/>
        <end position="305"/>
    </location>
</feature>
<feature type="transmembrane region" description="Helical" evidence="1">
    <location>
        <begin position="380"/>
        <end position="400"/>
    </location>
</feature>
<feature type="transmembrane region" description="Helical" evidence="1">
    <location>
        <begin position="417"/>
        <end position="437"/>
    </location>
</feature>
<feature type="transmembrane region" description="Helical" evidence="1">
    <location>
        <begin position="484"/>
        <end position="504"/>
    </location>
</feature>
<feature type="transmembrane region" description="Helical" evidence="1">
    <location>
        <begin position="528"/>
        <end position="548"/>
    </location>
</feature>